<evidence type="ECO:0000255" key="1">
    <source>
        <dbReference type="HAMAP-Rule" id="MF_00405"/>
    </source>
</evidence>
<keyword id="KW-0963">Cytoplasm</keyword>
<keyword id="KW-0275">Fatty acid biosynthesis</keyword>
<keyword id="KW-0276">Fatty acid metabolism</keyword>
<keyword id="KW-0413">Isomerase</keyword>
<keyword id="KW-0444">Lipid biosynthesis</keyword>
<keyword id="KW-0443">Lipid metabolism</keyword>
<keyword id="KW-0456">Lyase</keyword>
<keyword id="KW-1185">Reference proteome</keyword>
<organism>
    <name type="scientific">Brucella canis (strain ATCC 23365 / NCTC 10854 / RM-666)</name>
    <dbReference type="NCBI Taxonomy" id="483179"/>
    <lineage>
        <taxon>Bacteria</taxon>
        <taxon>Pseudomonadati</taxon>
        <taxon>Pseudomonadota</taxon>
        <taxon>Alphaproteobacteria</taxon>
        <taxon>Hyphomicrobiales</taxon>
        <taxon>Brucellaceae</taxon>
        <taxon>Brucella/Ochrobactrum group</taxon>
        <taxon>Brucella</taxon>
    </lineage>
</organism>
<gene>
    <name evidence="1" type="primary">fabA</name>
    <name type="ordered locus">BCAN_A2215</name>
</gene>
<sequence length="172" mass="19086">MAEQKSSYGYEELLACGRGEMFGPGNAQLPLPPMLMIHRITEISETGGAFDKGYIRAEYDVRPDDWYFPCHFQGNPIMPGCLGLDGMWQLTGFFLGWLGEPGRGMALSTGEVKFKGMVRPHTKLLEYGIDFKRVMRGRLVLGTADGWLKADGELIYQATDLRVGLSKEGSAQ</sequence>
<proteinExistence type="inferred from homology"/>
<feature type="chain" id="PRO_1000080424" description="3-hydroxydecanoyl-[acyl-carrier-protein] dehydratase">
    <location>
        <begin position="1"/>
        <end position="172"/>
    </location>
</feature>
<feature type="active site" evidence="1">
    <location>
        <position position="71"/>
    </location>
</feature>
<reference key="1">
    <citation type="submission" date="2007-10" db="EMBL/GenBank/DDBJ databases">
        <title>Brucella canis ATCC 23365 whole genome shotgun sequencing project.</title>
        <authorList>
            <person name="Setubal J.C."/>
            <person name="Bowns C."/>
            <person name="Boyle S."/>
            <person name="Crasta O.R."/>
            <person name="Czar M.J."/>
            <person name="Dharmanolla C."/>
            <person name="Gillespie J.J."/>
            <person name="Kenyon R.W."/>
            <person name="Lu J."/>
            <person name="Mane S."/>
            <person name="Mohapatra S."/>
            <person name="Nagrani S."/>
            <person name="Purkayastha A."/>
            <person name="Rajasimha H.K."/>
            <person name="Shallom J.M."/>
            <person name="Shallom S."/>
            <person name="Shukla M."/>
            <person name="Snyder E.E."/>
            <person name="Sobral B.W."/>
            <person name="Wattam A.R."/>
            <person name="Will R."/>
            <person name="Williams K."/>
            <person name="Yoo H."/>
            <person name="Bruce D."/>
            <person name="Detter C."/>
            <person name="Munk C."/>
            <person name="Brettin T.S."/>
        </authorList>
    </citation>
    <scope>NUCLEOTIDE SEQUENCE [LARGE SCALE GENOMIC DNA]</scope>
    <source>
        <strain>ATCC 23365 / NCTC 10854 / RM-666</strain>
    </source>
</reference>
<protein>
    <recommendedName>
        <fullName evidence="1">3-hydroxydecanoyl-[acyl-carrier-protein] dehydratase</fullName>
        <ecNumber evidence="1">4.2.1.59</ecNumber>
    </recommendedName>
    <alternativeName>
        <fullName evidence="1">3-hydroxyacyl-[acyl-carrier-protein] dehydratase FabA</fullName>
    </alternativeName>
    <alternativeName>
        <fullName evidence="1">Beta-hydroxydecanoyl thioester dehydrase</fullName>
    </alternativeName>
    <alternativeName>
        <fullName evidence="1">Trans-2-decenoyl-[acyl-carrier-protein] isomerase</fullName>
        <ecNumber evidence="1">5.3.3.14</ecNumber>
    </alternativeName>
</protein>
<dbReference type="EC" id="4.2.1.59" evidence="1"/>
<dbReference type="EC" id="5.3.3.14" evidence="1"/>
<dbReference type="EMBL" id="CP000872">
    <property type="protein sequence ID" value="ABX63197.1"/>
    <property type="molecule type" value="Genomic_DNA"/>
</dbReference>
<dbReference type="RefSeq" id="WP_002968051.1">
    <property type="nucleotide sequence ID" value="NC_010103.1"/>
</dbReference>
<dbReference type="SMR" id="A9MA02"/>
<dbReference type="GeneID" id="97534574"/>
<dbReference type="KEGG" id="bcs:BCAN_A2215"/>
<dbReference type="HOGENOM" id="CLU_097925_0_0_5"/>
<dbReference type="UniPathway" id="UPA00094"/>
<dbReference type="Proteomes" id="UP000001385">
    <property type="component" value="Chromosome I"/>
</dbReference>
<dbReference type="GO" id="GO:0005737">
    <property type="term" value="C:cytoplasm"/>
    <property type="evidence" value="ECO:0007669"/>
    <property type="project" value="UniProtKB-SubCell"/>
</dbReference>
<dbReference type="GO" id="GO:0019171">
    <property type="term" value="F:(3R)-hydroxyacyl-[acyl-carrier-protein] dehydratase activity"/>
    <property type="evidence" value="ECO:0007669"/>
    <property type="project" value="UniProtKB-UniRule"/>
</dbReference>
<dbReference type="GO" id="GO:0034017">
    <property type="term" value="F:trans-2-decenoyl-acyl-carrier-protein isomerase activity"/>
    <property type="evidence" value="ECO:0007669"/>
    <property type="project" value="UniProtKB-UniRule"/>
</dbReference>
<dbReference type="GO" id="GO:0006636">
    <property type="term" value="P:unsaturated fatty acid biosynthetic process"/>
    <property type="evidence" value="ECO:0007669"/>
    <property type="project" value="UniProtKB-UniRule"/>
</dbReference>
<dbReference type="CDD" id="cd01287">
    <property type="entry name" value="FabA"/>
    <property type="match status" value="1"/>
</dbReference>
<dbReference type="Gene3D" id="3.10.129.10">
    <property type="entry name" value="Hotdog Thioesterase"/>
    <property type="match status" value="1"/>
</dbReference>
<dbReference type="HAMAP" id="MF_00405">
    <property type="entry name" value="FabA"/>
    <property type="match status" value="1"/>
</dbReference>
<dbReference type="InterPro" id="IPR010083">
    <property type="entry name" value="FabA"/>
</dbReference>
<dbReference type="InterPro" id="IPR013114">
    <property type="entry name" value="FabA_FabZ"/>
</dbReference>
<dbReference type="InterPro" id="IPR029069">
    <property type="entry name" value="HotDog_dom_sf"/>
</dbReference>
<dbReference type="NCBIfam" id="TIGR01749">
    <property type="entry name" value="fabA"/>
    <property type="match status" value="1"/>
</dbReference>
<dbReference type="NCBIfam" id="NF003509">
    <property type="entry name" value="PRK05174.1"/>
    <property type="match status" value="1"/>
</dbReference>
<dbReference type="PANTHER" id="PTHR30272">
    <property type="entry name" value="3-HYDROXYACYL-[ACYL-CARRIER-PROTEIN] DEHYDRATASE"/>
    <property type="match status" value="1"/>
</dbReference>
<dbReference type="PANTHER" id="PTHR30272:SF8">
    <property type="entry name" value="3-HYDROXYDECANOYL-[ACYL-CARRIER-PROTEIN] DEHYDRATASE"/>
    <property type="match status" value="1"/>
</dbReference>
<dbReference type="Pfam" id="PF07977">
    <property type="entry name" value="FabA"/>
    <property type="match status" value="1"/>
</dbReference>
<dbReference type="SUPFAM" id="SSF54637">
    <property type="entry name" value="Thioesterase/thiol ester dehydrase-isomerase"/>
    <property type="match status" value="1"/>
</dbReference>
<accession>A9MA02</accession>
<name>FABA_BRUC2</name>
<comment type="function">
    <text evidence="1">Necessary for the introduction of cis unsaturation into fatty acids. Catalyzes the dehydration of (3R)-3-hydroxydecanoyl-ACP to E-(2)-decenoyl-ACP and then its isomerization to Z-(3)-decenoyl-ACP. Can catalyze the dehydratase reaction for beta-hydroxyacyl-ACPs with saturated chain lengths up to 16:0, being most active on intermediate chain length.</text>
</comment>
<comment type="catalytic activity">
    <reaction evidence="1">
        <text>a (3R)-hydroxyacyl-[ACP] = a (2E)-enoyl-[ACP] + H2O</text>
        <dbReference type="Rhea" id="RHEA:13097"/>
        <dbReference type="Rhea" id="RHEA-COMP:9925"/>
        <dbReference type="Rhea" id="RHEA-COMP:9945"/>
        <dbReference type="ChEBI" id="CHEBI:15377"/>
        <dbReference type="ChEBI" id="CHEBI:78784"/>
        <dbReference type="ChEBI" id="CHEBI:78827"/>
        <dbReference type="EC" id="4.2.1.59"/>
    </reaction>
</comment>
<comment type="catalytic activity">
    <reaction evidence="1">
        <text>(3R)-hydroxydecanoyl-[ACP] = (2E)-decenoyl-[ACP] + H2O</text>
        <dbReference type="Rhea" id="RHEA:41860"/>
        <dbReference type="Rhea" id="RHEA-COMP:9638"/>
        <dbReference type="Rhea" id="RHEA-COMP:9639"/>
        <dbReference type="ChEBI" id="CHEBI:15377"/>
        <dbReference type="ChEBI" id="CHEBI:78466"/>
        <dbReference type="ChEBI" id="CHEBI:78467"/>
    </reaction>
</comment>
<comment type="catalytic activity">
    <reaction evidence="1">
        <text>(2E)-decenoyl-[ACP] = (3Z)-decenoyl-[ACP]</text>
        <dbReference type="Rhea" id="RHEA:23568"/>
        <dbReference type="Rhea" id="RHEA-COMP:9639"/>
        <dbReference type="Rhea" id="RHEA-COMP:9927"/>
        <dbReference type="ChEBI" id="CHEBI:78467"/>
        <dbReference type="ChEBI" id="CHEBI:78798"/>
        <dbReference type="EC" id="5.3.3.14"/>
    </reaction>
</comment>
<comment type="pathway">
    <text evidence="1">Lipid metabolism; fatty acid biosynthesis.</text>
</comment>
<comment type="subunit">
    <text evidence="1">Homodimer.</text>
</comment>
<comment type="subcellular location">
    <subcellularLocation>
        <location evidence="1">Cytoplasm</location>
    </subcellularLocation>
</comment>
<comment type="similarity">
    <text evidence="1">Belongs to the thioester dehydratase family. FabA subfamily.</text>
</comment>